<name>MURI_LIMRD</name>
<feature type="chain" id="PRO_1000059069" description="Glutamate racemase">
    <location>
        <begin position="1"/>
        <end position="267"/>
    </location>
</feature>
<feature type="active site" description="Proton donor/acceptor" evidence="1">
    <location>
        <position position="73"/>
    </location>
</feature>
<feature type="active site" description="Proton donor/acceptor" evidence="1">
    <location>
        <position position="183"/>
    </location>
</feature>
<feature type="binding site" evidence="1">
    <location>
        <begin position="10"/>
        <end position="11"/>
    </location>
    <ligand>
        <name>substrate</name>
    </ligand>
</feature>
<feature type="binding site" evidence="1">
    <location>
        <begin position="42"/>
        <end position="43"/>
    </location>
    <ligand>
        <name>substrate</name>
    </ligand>
</feature>
<feature type="binding site" evidence="1">
    <location>
        <begin position="74"/>
        <end position="75"/>
    </location>
    <ligand>
        <name>substrate</name>
    </ligand>
</feature>
<feature type="binding site" evidence="1">
    <location>
        <begin position="184"/>
        <end position="185"/>
    </location>
    <ligand>
        <name>substrate</name>
    </ligand>
</feature>
<gene>
    <name evidence="1" type="primary">murI</name>
    <name type="ordered locus">Lreu_0541</name>
</gene>
<comment type="function">
    <text evidence="1">Provides the (R)-glutamate required for cell wall biosynthesis.</text>
</comment>
<comment type="catalytic activity">
    <reaction evidence="1">
        <text>L-glutamate = D-glutamate</text>
        <dbReference type="Rhea" id="RHEA:12813"/>
        <dbReference type="ChEBI" id="CHEBI:29985"/>
        <dbReference type="ChEBI" id="CHEBI:29986"/>
        <dbReference type="EC" id="5.1.1.3"/>
    </reaction>
</comment>
<comment type="pathway">
    <text evidence="1">Cell wall biogenesis; peptidoglycan biosynthesis.</text>
</comment>
<comment type="similarity">
    <text evidence="1">Belongs to the aspartate/glutamate racemases family.</text>
</comment>
<reference key="1">
    <citation type="journal article" date="2011" name="PLoS Genet.">
        <title>The evolution of host specialization in the vertebrate gut symbiont Lactobacillus reuteri.</title>
        <authorList>
            <person name="Frese S.A."/>
            <person name="Benson A.K."/>
            <person name="Tannock G.W."/>
            <person name="Loach D.M."/>
            <person name="Kim J."/>
            <person name="Zhang M."/>
            <person name="Oh P.L."/>
            <person name="Heng N.C."/>
            <person name="Patil P.B."/>
            <person name="Juge N."/>
            <person name="Mackenzie D.A."/>
            <person name="Pearson B.M."/>
            <person name="Lapidus A."/>
            <person name="Dalin E."/>
            <person name="Tice H."/>
            <person name="Goltsman E."/>
            <person name="Land M."/>
            <person name="Hauser L."/>
            <person name="Ivanova N."/>
            <person name="Kyrpides N.C."/>
            <person name="Walter J."/>
        </authorList>
    </citation>
    <scope>NUCLEOTIDE SEQUENCE [LARGE SCALE GENOMIC DNA]</scope>
    <source>
        <strain>DSM 20016</strain>
    </source>
</reference>
<sequence length="267" mass="28920">MDKRPIGVMDSGLGGLSVIRVLREQLPQESVIFVGDQGHFPYGTKTKEQIQQLALRIGKFLLEQDVKMMIIACNTATAAALRLLQNELPIPVIGVIKPGAMAATQHHYKKIGVIGTESTIKNGAYAKTLAKLNPDLSVISSPAQPLVSIVEHGQTGTSEAQKAVDTELEVFDNQSIEALILGCTHFPFLQKEIHNKLGSNVQLIDPAFETIRQAKELLTGKNQLSDNLASSINLYSTGDAKDLVAGAQQWLPNGYSKCAHIELNEEG</sequence>
<proteinExistence type="inferred from homology"/>
<evidence type="ECO:0000255" key="1">
    <source>
        <dbReference type="HAMAP-Rule" id="MF_00258"/>
    </source>
</evidence>
<organism>
    <name type="scientific">Limosilactobacillus reuteri (strain DSM 20016)</name>
    <name type="common">Lactobacillus reuteri</name>
    <dbReference type="NCBI Taxonomy" id="557436"/>
    <lineage>
        <taxon>Bacteria</taxon>
        <taxon>Bacillati</taxon>
        <taxon>Bacillota</taxon>
        <taxon>Bacilli</taxon>
        <taxon>Lactobacillales</taxon>
        <taxon>Lactobacillaceae</taxon>
        <taxon>Limosilactobacillus</taxon>
    </lineage>
</organism>
<protein>
    <recommendedName>
        <fullName evidence="1">Glutamate racemase</fullName>
        <ecNumber evidence="1">5.1.1.3</ecNumber>
    </recommendedName>
</protein>
<accession>A5VIY5</accession>
<dbReference type="EC" id="5.1.1.3" evidence="1"/>
<dbReference type="EMBL" id="CP000705">
    <property type="protein sequence ID" value="ABQ82809.1"/>
    <property type="molecule type" value="Genomic_DNA"/>
</dbReference>
<dbReference type="RefSeq" id="WP_003667643.1">
    <property type="nucleotide sequence ID" value="NC_009513.1"/>
</dbReference>
<dbReference type="SMR" id="A5VIY5"/>
<dbReference type="STRING" id="557436.Lreu_0541"/>
<dbReference type="KEGG" id="lre:Lreu_0541"/>
<dbReference type="PATRIC" id="fig|557436.17.peg.1821"/>
<dbReference type="eggNOG" id="COG0796">
    <property type="taxonomic scope" value="Bacteria"/>
</dbReference>
<dbReference type="HOGENOM" id="CLU_052344_0_2_9"/>
<dbReference type="UniPathway" id="UPA00219"/>
<dbReference type="Proteomes" id="UP000001991">
    <property type="component" value="Chromosome"/>
</dbReference>
<dbReference type="GO" id="GO:0008881">
    <property type="term" value="F:glutamate racemase activity"/>
    <property type="evidence" value="ECO:0007669"/>
    <property type="project" value="UniProtKB-UniRule"/>
</dbReference>
<dbReference type="GO" id="GO:0071555">
    <property type="term" value="P:cell wall organization"/>
    <property type="evidence" value="ECO:0007669"/>
    <property type="project" value="UniProtKB-KW"/>
</dbReference>
<dbReference type="GO" id="GO:0009252">
    <property type="term" value="P:peptidoglycan biosynthetic process"/>
    <property type="evidence" value="ECO:0007669"/>
    <property type="project" value="UniProtKB-UniRule"/>
</dbReference>
<dbReference type="GO" id="GO:0008360">
    <property type="term" value="P:regulation of cell shape"/>
    <property type="evidence" value="ECO:0007669"/>
    <property type="project" value="UniProtKB-KW"/>
</dbReference>
<dbReference type="FunFam" id="3.40.50.1860:FF:000002">
    <property type="entry name" value="Glutamate racemase"/>
    <property type="match status" value="1"/>
</dbReference>
<dbReference type="Gene3D" id="3.40.50.1860">
    <property type="match status" value="2"/>
</dbReference>
<dbReference type="HAMAP" id="MF_00258">
    <property type="entry name" value="Glu_racemase"/>
    <property type="match status" value="1"/>
</dbReference>
<dbReference type="InterPro" id="IPR015942">
    <property type="entry name" value="Asp/Glu/hydantoin_racemase"/>
</dbReference>
<dbReference type="InterPro" id="IPR001920">
    <property type="entry name" value="Asp/Glu_race"/>
</dbReference>
<dbReference type="InterPro" id="IPR018187">
    <property type="entry name" value="Asp/Glu_racemase_AS_1"/>
</dbReference>
<dbReference type="InterPro" id="IPR033134">
    <property type="entry name" value="Asp/Glu_racemase_AS_2"/>
</dbReference>
<dbReference type="InterPro" id="IPR004391">
    <property type="entry name" value="Glu_race"/>
</dbReference>
<dbReference type="NCBIfam" id="TIGR00067">
    <property type="entry name" value="glut_race"/>
    <property type="match status" value="1"/>
</dbReference>
<dbReference type="PANTHER" id="PTHR21198">
    <property type="entry name" value="GLUTAMATE RACEMASE"/>
    <property type="match status" value="1"/>
</dbReference>
<dbReference type="PANTHER" id="PTHR21198:SF2">
    <property type="entry name" value="GLUTAMATE RACEMASE"/>
    <property type="match status" value="1"/>
</dbReference>
<dbReference type="Pfam" id="PF01177">
    <property type="entry name" value="Asp_Glu_race"/>
    <property type="match status" value="1"/>
</dbReference>
<dbReference type="SUPFAM" id="SSF53681">
    <property type="entry name" value="Aspartate/glutamate racemase"/>
    <property type="match status" value="2"/>
</dbReference>
<dbReference type="PROSITE" id="PS00923">
    <property type="entry name" value="ASP_GLU_RACEMASE_1"/>
    <property type="match status" value="1"/>
</dbReference>
<dbReference type="PROSITE" id="PS00924">
    <property type="entry name" value="ASP_GLU_RACEMASE_2"/>
    <property type="match status" value="1"/>
</dbReference>
<keyword id="KW-0133">Cell shape</keyword>
<keyword id="KW-0961">Cell wall biogenesis/degradation</keyword>
<keyword id="KW-0413">Isomerase</keyword>
<keyword id="KW-0573">Peptidoglycan synthesis</keyword>
<keyword id="KW-1185">Reference proteome</keyword>